<keyword id="KW-0903">Direct protein sequencing</keyword>
<keyword id="KW-0597">Phosphoprotein</keyword>
<keyword id="KW-1185">Reference proteome</keyword>
<accession>Q9FKA5</accession>
<accession>Q8H7G9</accession>
<organism>
    <name type="scientific">Arabidopsis thaliana</name>
    <name type="common">Mouse-ear cress</name>
    <dbReference type="NCBI Taxonomy" id="3702"/>
    <lineage>
        <taxon>Eukaryota</taxon>
        <taxon>Viridiplantae</taxon>
        <taxon>Streptophyta</taxon>
        <taxon>Embryophyta</taxon>
        <taxon>Tracheophyta</taxon>
        <taxon>Spermatophyta</taxon>
        <taxon>Magnoliopsida</taxon>
        <taxon>eudicotyledons</taxon>
        <taxon>Gunneridae</taxon>
        <taxon>Pentapetalae</taxon>
        <taxon>rosids</taxon>
        <taxon>malvids</taxon>
        <taxon>Brassicales</taxon>
        <taxon>Brassicaceae</taxon>
        <taxon>Camelineae</taxon>
        <taxon>Arabidopsis</taxon>
    </lineage>
</organism>
<proteinExistence type="evidence at protein level"/>
<protein>
    <recommendedName>
        <fullName>Uncharacterized protein At5g39570</fullName>
    </recommendedName>
</protein>
<feature type="chain" id="PRO_0000261600" description="Uncharacterized protein At5g39570">
    <location>
        <begin position="1"/>
        <end position="381"/>
    </location>
</feature>
<feature type="region of interest" description="Disordered" evidence="1">
    <location>
        <begin position="1"/>
        <end position="20"/>
    </location>
</feature>
<feature type="region of interest" description="Disordered" evidence="1">
    <location>
        <begin position="36"/>
        <end position="381"/>
    </location>
</feature>
<feature type="compositionally biased region" description="Acidic residues" evidence="1">
    <location>
        <begin position="9"/>
        <end position="18"/>
    </location>
</feature>
<feature type="compositionally biased region" description="Basic and acidic residues" evidence="1">
    <location>
        <begin position="166"/>
        <end position="175"/>
    </location>
</feature>
<feature type="compositionally biased region" description="Basic and acidic residues" evidence="1">
    <location>
        <begin position="186"/>
        <end position="237"/>
    </location>
</feature>
<feature type="compositionally biased region" description="Basic residues" evidence="1">
    <location>
        <begin position="364"/>
        <end position="374"/>
    </location>
</feature>
<feature type="modified residue" description="Phosphoserine" evidence="2 3">
    <location>
        <position position="339"/>
    </location>
</feature>
<feature type="modified residue" description="Phosphoserine" evidence="3">
    <location>
        <position position="346"/>
    </location>
</feature>
<feature type="modified residue" description="Phosphoserine" evidence="3">
    <location>
        <position position="357"/>
    </location>
</feature>
<evidence type="ECO:0000256" key="1">
    <source>
        <dbReference type="SAM" id="MobiDB-lite"/>
    </source>
</evidence>
<evidence type="ECO:0000269" key="2">
    <source>
    </source>
</evidence>
<evidence type="ECO:0007744" key="3">
    <source>
    </source>
</evidence>
<reference key="1">
    <citation type="submission" date="1998-08" db="EMBL/GenBank/DDBJ databases">
        <title>Signal peptide selection derived cDNAs from Arabidopsis thaliana leaves and guard cells.</title>
        <authorList>
            <person name="Stracke R."/>
            <person name="Palme K."/>
        </authorList>
    </citation>
    <scope>NUCLEOTIDE SEQUENCE [LARGE SCALE MRNA]</scope>
</reference>
<reference key="2">
    <citation type="journal article" date="1998" name="DNA Res.">
        <title>Structural analysis of Arabidopsis thaliana chromosome 5. VI. Sequence features of the regions of 1,367,185 bp covered by 19 physically assigned P1 and TAC clones.</title>
        <authorList>
            <person name="Kotani H."/>
            <person name="Nakamura Y."/>
            <person name="Sato S."/>
            <person name="Asamizu E."/>
            <person name="Kaneko T."/>
            <person name="Miyajima N."/>
            <person name="Tabata S."/>
        </authorList>
    </citation>
    <scope>NUCLEOTIDE SEQUENCE [LARGE SCALE GENOMIC DNA]</scope>
    <source>
        <strain>cv. Columbia</strain>
    </source>
</reference>
<reference key="3">
    <citation type="journal article" date="2017" name="Plant J.">
        <title>Araport11: a complete reannotation of the Arabidopsis thaliana reference genome.</title>
        <authorList>
            <person name="Cheng C.Y."/>
            <person name="Krishnakumar V."/>
            <person name="Chan A.P."/>
            <person name="Thibaud-Nissen F."/>
            <person name="Schobel S."/>
            <person name="Town C.D."/>
        </authorList>
    </citation>
    <scope>GENOME REANNOTATION</scope>
    <source>
        <strain>cv. Columbia</strain>
    </source>
</reference>
<reference key="4">
    <citation type="journal article" date="2003" name="Science">
        <title>Empirical analysis of transcriptional activity in the Arabidopsis genome.</title>
        <authorList>
            <person name="Yamada K."/>
            <person name="Lim J."/>
            <person name="Dale J.M."/>
            <person name="Chen H."/>
            <person name="Shinn P."/>
            <person name="Palm C.J."/>
            <person name="Southwick A.M."/>
            <person name="Wu H.C."/>
            <person name="Kim C.J."/>
            <person name="Nguyen M."/>
            <person name="Pham P.K."/>
            <person name="Cheuk R.F."/>
            <person name="Karlin-Newmann G."/>
            <person name="Liu S.X."/>
            <person name="Lam B."/>
            <person name="Sakano H."/>
            <person name="Wu T."/>
            <person name="Yu G."/>
            <person name="Miranda M."/>
            <person name="Quach H.L."/>
            <person name="Tripp M."/>
            <person name="Chang C.H."/>
            <person name="Lee J.M."/>
            <person name="Toriumi M.J."/>
            <person name="Chan M.M."/>
            <person name="Tang C.C."/>
            <person name="Onodera C.S."/>
            <person name="Deng J.M."/>
            <person name="Akiyama K."/>
            <person name="Ansari Y."/>
            <person name="Arakawa T."/>
            <person name="Banh J."/>
            <person name="Banno F."/>
            <person name="Bowser L."/>
            <person name="Brooks S.Y."/>
            <person name="Carninci P."/>
            <person name="Chao Q."/>
            <person name="Choy N."/>
            <person name="Enju A."/>
            <person name="Goldsmith A.D."/>
            <person name="Gurjal M."/>
            <person name="Hansen N.F."/>
            <person name="Hayashizaki Y."/>
            <person name="Johnson-Hopson C."/>
            <person name="Hsuan V.W."/>
            <person name="Iida K."/>
            <person name="Karnes M."/>
            <person name="Khan S."/>
            <person name="Koesema E."/>
            <person name="Ishida J."/>
            <person name="Jiang P.X."/>
            <person name="Jones T."/>
            <person name="Kawai J."/>
            <person name="Kamiya A."/>
            <person name="Meyers C."/>
            <person name="Nakajima M."/>
            <person name="Narusaka M."/>
            <person name="Seki M."/>
            <person name="Sakurai T."/>
            <person name="Satou M."/>
            <person name="Tamse R."/>
            <person name="Vaysberg M."/>
            <person name="Wallender E.K."/>
            <person name="Wong C."/>
            <person name="Yamamura Y."/>
            <person name="Yuan S."/>
            <person name="Shinozaki K."/>
            <person name="Davis R.W."/>
            <person name="Theologis A."/>
            <person name="Ecker J.R."/>
        </authorList>
    </citation>
    <scope>NUCLEOTIDE SEQUENCE [LARGE SCALE MRNA]</scope>
    <source>
        <strain>cv. Columbia</strain>
    </source>
</reference>
<reference key="5">
    <citation type="journal article" date="2006" name="Phytochemistry">
        <title>Phosphoproteins analysis in plants: a proteomic approach.</title>
        <authorList>
            <person name="Laugesen S."/>
            <person name="Messinese E."/>
            <person name="Hem S."/>
            <person name="Pichereaux C."/>
            <person name="Grat S."/>
            <person name="Ranjeva R."/>
            <person name="Rossignol M."/>
            <person name="Bono J.-J."/>
        </authorList>
    </citation>
    <scope>PROTEIN SEQUENCE OF 337-350</scope>
    <scope>PHOSPHORYLATION AT SER-339</scope>
</reference>
<reference key="6">
    <citation type="journal article" date="2008" name="J. Proteome Res.">
        <title>Site-specific phosphorylation profiling of Arabidopsis proteins by mass spectrometry and peptide chip analysis.</title>
        <authorList>
            <person name="de la Fuente van Bentem S."/>
            <person name="Anrather D."/>
            <person name="Dohnal I."/>
            <person name="Roitinger E."/>
            <person name="Csaszar E."/>
            <person name="Joore J."/>
            <person name="Buijnink J."/>
            <person name="Carreri A."/>
            <person name="Forzani C."/>
            <person name="Lorkovic Z.J."/>
            <person name="Barta A."/>
            <person name="Lecourieux D."/>
            <person name="Verhounig A."/>
            <person name="Jonak C."/>
            <person name="Hirt H."/>
        </authorList>
    </citation>
    <scope>PHOSPHORYLATION [LARGE SCALE ANALYSIS] AT SER-339; SER-346 AND SER-357</scope>
    <scope>IDENTIFICATION BY MASS SPECTROMETRY [LARGE SCALE ANALYSIS]</scope>
    <source>
        <tissue>Root</tissue>
    </source>
</reference>
<dbReference type="EMBL" id="AF083682">
    <property type="protein sequence ID" value="AAN60241.1"/>
    <property type="molecule type" value="mRNA"/>
</dbReference>
<dbReference type="EMBL" id="AB012243">
    <property type="protein sequence ID" value="BAB08888.1"/>
    <property type="molecule type" value="Genomic_DNA"/>
</dbReference>
<dbReference type="EMBL" id="CP002688">
    <property type="status" value="NOT_ANNOTATED_CDS"/>
    <property type="molecule type" value="Genomic_DNA"/>
</dbReference>
<dbReference type="EMBL" id="BT000496">
    <property type="protein sequence ID" value="AAN18065.1"/>
    <property type="molecule type" value="mRNA"/>
</dbReference>
<dbReference type="EMBL" id="AY058080">
    <property type="protein sequence ID" value="AAL24188.1"/>
    <property type="molecule type" value="mRNA"/>
</dbReference>
<dbReference type="BioGRID" id="19204">
    <property type="interactions" value="1"/>
</dbReference>
<dbReference type="STRING" id="3702.Q9FKA5"/>
<dbReference type="iPTMnet" id="Q9FKA5"/>
<dbReference type="PaxDb" id="3702-AT5G39570.1"/>
<dbReference type="Araport" id="AT5G39570"/>
<dbReference type="TAIR" id="AT5G39570">
    <property type="gene designation" value="PLDRP1"/>
</dbReference>
<dbReference type="eggNOG" id="ENOG502STX7">
    <property type="taxonomic scope" value="Eukaryota"/>
</dbReference>
<dbReference type="HOGENOM" id="CLU_059651_0_0_1"/>
<dbReference type="InParanoid" id="Q9FKA5"/>
<dbReference type="PhylomeDB" id="Q9FKA5"/>
<dbReference type="PRO" id="PR:Q9FKA5"/>
<dbReference type="Proteomes" id="UP000006548">
    <property type="component" value="Chromosome 5"/>
</dbReference>
<dbReference type="ExpressionAtlas" id="Q9FKA5">
    <property type="expression patterns" value="baseline and differential"/>
</dbReference>
<dbReference type="GO" id="GO:0005829">
    <property type="term" value="C:cytosol"/>
    <property type="evidence" value="ECO:0007005"/>
    <property type="project" value="TAIR"/>
</dbReference>
<dbReference type="GO" id="GO:0009536">
    <property type="term" value="C:plastid"/>
    <property type="evidence" value="ECO:0007005"/>
    <property type="project" value="TAIR"/>
</dbReference>
<dbReference type="GO" id="GO:0003729">
    <property type="term" value="F:mRNA binding"/>
    <property type="evidence" value="ECO:0007005"/>
    <property type="project" value="TAIR"/>
</dbReference>
<dbReference type="GO" id="GO:0070300">
    <property type="term" value="F:phosphatidic acid binding"/>
    <property type="evidence" value="ECO:0000314"/>
    <property type="project" value="TAIR"/>
</dbReference>
<dbReference type="InterPro" id="IPR038943">
    <property type="entry name" value="PLDrp1-like"/>
</dbReference>
<dbReference type="PANTHER" id="PTHR33971:SF1">
    <property type="entry name" value="OS02G0743600 PROTEIN"/>
    <property type="match status" value="1"/>
</dbReference>
<dbReference type="PANTHER" id="PTHR33971">
    <property type="entry name" value="OS06G0232000 PROTEIN"/>
    <property type="match status" value="1"/>
</dbReference>
<name>Y5957_ARATH</name>
<gene>
    <name type="ordered locus">At5g39570</name>
    <name type="ORF">MIJ24_40</name>
</gene>
<sequence>MPYYTRDDNDVDDFDEFDPTPYSGGYDITVIYGRPIPPSDETCYPLSSGVDDDFEYERPEFTQIHEPSAYGDEALNTEYSSYSRPKPRPAFRPDSGGGGHVQGERPNPGYGSESGYGRKPESEYGSGYGGQTEVEYGRRPEQSYGSGYGGRTETESEYGSGGGGRTEVEYGRRPESGLGSGYGGRSESEYERKPSYGRSEEQEEGYRKPSYGRSEEQEEGYRKPSYGRSEEQEEGYRKPSYGRSEEEQEEGYRKPSYGRSEEQEEGSYRKPSYGRSDDQVESYIKPSYGRSEEQEEGSYRKPSYGRSEEQEEGSYRKQPSYGRGNDDDDDEQRRNRSGSGDDEEGSYGRKKYGGNDSDEDEEKKKHRHKHHHQKRRDEDDE</sequence>